<comment type="function">
    <text evidence="1">Catalyzes the ATP-dependent transfer of a sulfur to tRNA to produce 4-thiouridine in position 8 of tRNAs, which functions as a near-UV photosensor. Also catalyzes the transfer of sulfur to the sulfur carrier protein ThiS, forming ThiS-thiocarboxylate. This is a step in the synthesis of thiazole, in the thiamine biosynthesis pathway. The sulfur is donated as persulfide by IscS.</text>
</comment>
<comment type="catalytic activity">
    <reaction evidence="1">
        <text>[ThiI sulfur-carrier protein]-S-sulfanyl-L-cysteine + a uridine in tRNA + 2 reduced [2Fe-2S]-[ferredoxin] + ATP + H(+) = [ThiI sulfur-carrier protein]-L-cysteine + a 4-thiouridine in tRNA + 2 oxidized [2Fe-2S]-[ferredoxin] + AMP + diphosphate</text>
        <dbReference type="Rhea" id="RHEA:24176"/>
        <dbReference type="Rhea" id="RHEA-COMP:10000"/>
        <dbReference type="Rhea" id="RHEA-COMP:10001"/>
        <dbReference type="Rhea" id="RHEA-COMP:13337"/>
        <dbReference type="Rhea" id="RHEA-COMP:13338"/>
        <dbReference type="Rhea" id="RHEA-COMP:13339"/>
        <dbReference type="Rhea" id="RHEA-COMP:13340"/>
        <dbReference type="ChEBI" id="CHEBI:15378"/>
        <dbReference type="ChEBI" id="CHEBI:29950"/>
        <dbReference type="ChEBI" id="CHEBI:30616"/>
        <dbReference type="ChEBI" id="CHEBI:33019"/>
        <dbReference type="ChEBI" id="CHEBI:33737"/>
        <dbReference type="ChEBI" id="CHEBI:33738"/>
        <dbReference type="ChEBI" id="CHEBI:61963"/>
        <dbReference type="ChEBI" id="CHEBI:65315"/>
        <dbReference type="ChEBI" id="CHEBI:136798"/>
        <dbReference type="ChEBI" id="CHEBI:456215"/>
        <dbReference type="EC" id="2.8.1.4"/>
    </reaction>
</comment>
<comment type="catalytic activity">
    <reaction evidence="1">
        <text>[ThiS sulfur-carrier protein]-C-terminal Gly-Gly-AMP + S-sulfanyl-L-cysteinyl-[cysteine desulfurase] + AH2 = [ThiS sulfur-carrier protein]-C-terminal-Gly-aminoethanethioate + L-cysteinyl-[cysteine desulfurase] + A + AMP + 2 H(+)</text>
        <dbReference type="Rhea" id="RHEA:43340"/>
        <dbReference type="Rhea" id="RHEA-COMP:12157"/>
        <dbReference type="Rhea" id="RHEA-COMP:12158"/>
        <dbReference type="Rhea" id="RHEA-COMP:12910"/>
        <dbReference type="Rhea" id="RHEA-COMP:19908"/>
        <dbReference type="ChEBI" id="CHEBI:13193"/>
        <dbReference type="ChEBI" id="CHEBI:15378"/>
        <dbReference type="ChEBI" id="CHEBI:17499"/>
        <dbReference type="ChEBI" id="CHEBI:29950"/>
        <dbReference type="ChEBI" id="CHEBI:61963"/>
        <dbReference type="ChEBI" id="CHEBI:90618"/>
        <dbReference type="ChEBI" id="CHEBI:232372"/>
        <dbReference type="ChEBI" id="CHEBI:456215"/>
    </reaction>
</comment>
<comment type="pathway">
    <text evidence="1">Cofactor biosynthesis; thiamine diphosphate biosynthesis.</text>
</comment>
<comment type="subcellular location">
    <subcellularLocation>
        <location evidence="1">Cytoplasm</location>
    </subcellularLocation>
</comment>
<comment type="similarity">
    <text evidence="1">Belongs to the ThiI family.</text>
</comment>
<gene>
    <name evidence="1" type="primary">thiI</name>
    <name type="ordered locus">GWCH70_2718</name>
</gene>
<protein>
    <recommendedName>
        <fullName evidence="1">Probable tRNA sulfurtransferase</fullName>
        <ecNumber evidence="1">2.8.1.4</ecNumber>
    </recommendedName>
    <alternativeName>
        <fullName evidence="1">Sulfur carrier protein ThiS sulfurtransferase</fullName>
    </alternativeName>
    <alternativeName>
        <fullName evidence="1">Thiamine biosynthesis protein ThiI</fullName>
    </alternativeName>
    <alternativeName>
        <fullName evidence="1">tRNA 4-thiouridine synthase</fullName>
    </alternativeName>
</protein>
<name>THII_GEOSW</name>
<dbReference type="EC" id="2.8.1.4" evidence="1"/>
<dbReference type="EMBL" id="CP001638">
    <property type="protein sequence ID" value="ACS25409.1"/>
    <property type="molecule type" value="Genomic_DNA"/>
</dbReference>
<dbReference type="SMR" id="C5D693"/>
<dbReference type="STRING" id="471223.GWCH70_2718"/>
<dbReference type="KEGG" id="gwc:GWCH70_2718"/>
<dbReference type="eggNOG" id="COG0301">
    <property type="taxonomic scope" value="Bacteria"/>
</dbReference>
<dbReference type="HOGENOM" id="CLU_037952_4_0_9"/>
<dbReference type="OrthoDB" id="9773948at2"/>
<dbReference type="UniPathway" id="UPA00060"/>
<dbReference type="GO" id="GO:0005829">
    <property type="term" value="C:cytosol"/>
    <property type="evidence" value="ECO:0007669"/>
    <property type="project" value="TreeGrafter"/>
</dbReference>
<dbReference type="GO" id="GO:0005524">
    <property type="term" value="F:ATP binding"/>
    <property type="evidence" value="ECO:0007669"/>
    <property type="project" value="UniProtKB-UniRule"/>
</dbReference>
<dbReference type="GO" id="GO:0004810">
    <property type="term" value="F:CCA tRNA nucleotidyltransferase activity"/>
    <property type="evidence" value="ECO:0007669"/>
    <property type="project" value="InterPro"/>
</dbReference>
<dbReference type="GO" id="GO:0000049">
    <property type="term" value="F:tRNA binding"/>
    <property type="evidence" value="ECO:0007669"/>
    <property type="project" value="UniProtKB-UniRule"/>
</dbReference>
<dbReference type="GO" id="GO:0140741">
    <property type="term" value="F:tRNA-uracil-4 sulfurtransferase activity"/>
    <property type="evidence" value="ECO:0007669"/>
    <property type="project" value="UniProtKB-EC"/>
</dbReference>
<dbReference type="GO" id="GO:0009228">
    <property type="term" value="P:thiamine biosynthetic process"/>
    <property type="evidence" value="ECO:0007669"/>
    <property type="project" value="UniProtKB-KW"/>
</dbReference>
<dbReference type="GO" id="GO:0009229">
    <property type="term" value="P:thiamine diphosphate biosynthetic process"/>
    <property type="evidence" value="ECO:0007669"/>
    <property type="project" value="UniProtKB-UniRule"/>
</dbReference>
<dbReference type="GO" id="GO:0052837">
    <property type="term" value="P:thiazole biosynthetic process"/>
    <property type="evidence" value="ECO:0007669"/>
    <property type="project" value="TreeGrafter"/>
</dbReference>
<dbReference type="GO" id="GO:0002937">
    <property type="term" value="P:tRNA 4-thiouridine biosynthesis"/>
    <property type="evidence" value="ECO:0007669"/>
    <property type="project" value="TreeGrafter"/>
</dbReference>
<dbReference type="CDD" id="cd01712">
    <property type="entry name" value="PPase_ThiI"/>
    <property type="match status" value="1"/>
</dbReference>
<dbReference type="CDD" id="cd11716">
    <property type="entry name" value="THUMP_ThiI"/>
    <property type="match status" value="1"/>
</dbReference>
<dbReference type="FunFam" id="3.40.50.620:FF:000053">
    <property type="entry name" value="Probable tRNA sulfurtransferase"/>
    <property type="match status" value="1"/>
</dbReference>
<dbReference type="Gene3D" id="3.30.2130.30">
    <property type="match status" value="1"/>
</dbReference>
<dbReference type="Gene3D" id="3.40.50.620">
    <property type="entry name" value="HUPs"/>
    <property type="match status" value="1"/>
</dbReference>
<dbReference type="HAMAP" id="MF_00021">
    <property type="entry name" value="ThiI"/>
    <property type="match status" value="1"/>
</dbReference>
<dbReference type="InterPro" id="IPR014729">
    <property type="entry name" value="Rossmann-like_a/b/a_fold"/>
</dbReference>
<dbReference type="InterPro" id="IPR020536">
    <property type="entry name" value="ThiI_AANH"/>
</dbReference>
<dbReference type="InterPro" id="IPR054173">
    <property type="entry name" value="ThiI_fer"/>
</dbReference>
<dbReference type="InterPro" id="IPR049961">
    <property type="entry name" value="ThiI_N"/>
</dbReference>
<dbReference type="InterPro" id="IPR004114">
    <property type="entry name" value="THUMP_dom"/>
</dbReference>
<dbReference type="InterPro" id="IPR049962">
    <property type="entry name" value="THUMP_ThiI"/>
</dbReference>
<dbReference type="InterPro" id="IPR003720">
    <property type="entry name" value="tRNA_STrfase"/>
</dbReference>
<dbReference type="InterPro" id="IPR050102">
    <property type="entry name" value="tRNA_sulfurtransferase_ThiI"/>
</dbReference>
<dbReference type="NCBIfam" id="TIGR00342">
    <property type="entry name" value="tRNA uracil 4-sulfurtransferase ThiI"/>
    <property type="match status" value="1"/>
</dbReference>
<dbReference type="PANTHER" id="PTHR43209">
    <property type="entry name" value="TRNA SULFURTRANSFERASE"/>
    <property type="match status" value="1"/>
</dbReference>
<dbReference type="PANTHER" id="PTHR43209:SF1">
    <property type="entry name" value="TRNA SULFURTRANSFERASE"/>
    <property type="match status" value="1"/>
</dbReference>
<dbReference type="Pfam" id="PF02568">
    <property type="entry name" value="ThiI"/>
    <property type="match status" value="1"/>
</dbReference>
<dbReference type="Pfam" id="PF22025">
    <property type="entry name" value="ThiI_fer"/>
    <property type="match status" value="1"/>
</dbReference>
<dbReference type="Pfam" id="PF02926">
    <property type="entry name" value="THUMP"/>
    <property type="match status" value="1"/>
</dbReference>
<dbReference type="SMART" id="SM00981">
    <property type="entry name" value="THUMP"/>
    <property type="match status" value="1"/>
</dbReference>
<dbReference type="SUPFAM" id="SSF52402">
    <property type="entry name" value="Adenine nucleotide alpha hydrolases-like"/>
    <property type="match status" value="1"/>
</dbReference>
<dbReference type="SUPFAM" id="SSF143437">
    <property type="entry name" value="THUMP domain-like"/>
    <property type="match status" value="1"/>
</dbReference>
<dbReference type="PROSITE" id="PS51165">
    <property type="entry name" value="THUMP"/>
    <property type="match status" value="1"/>
</dbReference>
<feature type="chain" id="PRO_1000201915" description="Probable tRNA sulfurtransferase">
    <location>
        <begin position="1"/>
        <end position="401"/>
    </location>
</feature>
<feature type="domain" description="THUMP" evidence="1">
    <location>
        <begin position="60"/>
        <end position="165"/>
    </location>
</feature>
<feature type="binding site" evidence="1">
    <location>
        <begin position="183"/>
        <end position="184"/>
    </location>
    <ligand>
        <name>ATP</name>
        <dbReference type="ChEBI" id="CHEBI:30616"/>
    </ligand>
</feature>
<feature type="binding site" evidence="1">
    <location>
        <begin position="208"/>
        <end position="209"/>
    </location>
    <ligand>
        <name>ATP</name>
        <dbReference type="ChEBI" id="CHEBI:30616"/>
    </ligand>
</feature>
<feature type="binding site" evidence="1">
    <location>
        <position position="265"/>
    </location>
    <ligand>
        <name>ATP</name>
        <dbReference type="ChEBI" id="CHEBI:30616"/>
    </ligand>
</feature>
<feature type="binding site" evidence="1">
    <location>
        <position position="287"/>
    </location>
    <ligand>
        <name>ATP</name>
        <dbReference type="ChEBI" id="CHEBI:30616"/>
    </ligand>
</feature>
<feature type="binding site" evidence="1">
    <location>
        <position position="296"/>
    </location>
    <ligand>
        <name>ATP</name>
        <dbReference type="ChEBI" id="CHEBI:30616"/>
    </ligand>
</feature>
<organism>
    <name type="scientific">Geobacillus sp. (strain WCH70)</name>
    <dbReference type="NCBI Taxonomy" id="471223"/>
    <lineage>
        <taxon>Bacteria</taxon>
        <taxon>Bacillati</taxon>
        <taxon>Bacillota</taxon>
        <taxon>Bacilli</taxon>
        <taxon>Bacillales</taxon>
        <taxon>Anoxybacillaceae</taxon>
        <taxon>Geobacillus</taxon>
    </lineage>
</organism>
<reference key="1">
    <citation type="submission" date="2009-06" db="EMBL/GenBank/DDBJ databases">
        <title>Complete sequence of chromosome of Geopacillus sp. WCH70.</title>
        <authorList>
            <consortium name="US DOE Joint Genome Institute"/>
            <person name="Lucas S."/>
            <person name="Copeland A."/>
            <person name="Lapidus A."/>
            <person name="Glavina del Rio T."/>
            <person name="Dalin E."/>
            <person name="Tice H."/>
            <person name="Bruce D."/>
            <person name="Goodwin L."/>
            <person name="Pitluck S."/>
            <person name="Chertkov O."/>
            <person name="Brettin T."/>
            <person name="Detter J.C."/>
            <person name="Han C."/>
            <person name="Larimer F."/>
            <person name="Land M."/>
            <person name="Hauser L."/>
            <person name="Kyrpides N."/>
            <person name="Mikhailova N."/>
            <person name="Brumm P."/>
            <person name="Mead D.A."/>
            <person name="Richardson P."/>
        </authorList>
    </citation>
    <scope>NUCLEOTIDE SEQUENCE [LARGE SCALE GENOMIC DNA]</scope>
    <source>
        <strain>WCH70</strain>
    </source>
</reference>
<sequence>MKYDRILIRYGEMTTKGRNRNLFVRRLKDNVAKKLHAFQNIKIEYMRDRMYILLNGEPHEPIIDKLKNVFGIHSFSLAMKCHNELNEIKETALAAVKQLPHEGKTFKISARRVDKQFPYGSSELNYEIGAHILRNTDGLTVNVHDPDIDVRVEVRQEGTYITCHDIPGPGGLPVGSSGKAMLMLSGGIDSPVAGYLAMKRGLEIEAVHFFSPPFTSDRAKQKVIDLVKKLTTYGGKIKLHIVPFTEVQQAIYTQVPNEYSLISTRRAMLKITDALRQRHRALAIVTGESLGQVASQTLESMFVINDVTTTPILRPLVSMDKIEIIDIAKKIDTHDISILPYEDCCTIFTPRSPKTKPKKEKVVHYESFVDLQPLIEKAIANTETMVIDEHSATEDEFEQLF</sequence>
<keyword id="KW-0067">ATP-binding</keyword>
<keyword id="KW-0963">Cytoplasm</keyword>
<keyword id="KW-0547">Nucleotide-binding</keyword>
<keyword id="KW-0694">RNA-binding</keyword>
<keyword id="KW-0784">Thiamine biosynthesis</keyword>
<keyword id="KW-0808">Transferase</keyword>
<keyword id="KW-0820">tRNA-binding</keyword>
<proteinExistence type="inferred from homology"/>
<accession>C5D693</accession>
<evidence type="ECO:0000255" key="1">
    <source>
        <dbReference type="HAMAP-Rule" id="MF_00021"/>
    </source>
</evidence>